<protein>
    <recommendedName>
        <fullName evidence="10">Small ribosomal subunit protein uS10</fullName>
    </recommendedName>
    <alternativeName>
        <fullName>40S ribosomal protein S20</fullName>
    </alternativeName>
</protein>
<keyword id="KW-0002">3D-structure</keyword>
<keyword id="KW-0007">Acetylation</keyword>
<keyword id="KW-0025">Alternative splicing</keyword>
<keyword id="KW-0963">Cytoplasm</keyword>
<keyword id="KW-0903">Direct protein sequencing</keyword>
<keyword id="KW-1017">Isopeptide bond</keyword>
<keyword id="KW-0597">Phosphoprotein</keyword>
<keyword id="KW-1267">Proteomics identification</keyword>
<keyword id="KW-1185">Reference proteome</keyword>
<keyword id="KW-0687">Ribonucleoprotein</keyword>
<keyword id="KW-0689">Ribosomal protein</keyword>
<keyword id="KW-0832">Ubl conjugation</keyword>
<sequence>MAFKDTGKTPVEPEVAIHRIRITLTSRNVKSLEKVCADLIRGAKEKNLKVKGPVRMPTKTLRITTRKTPCGEGSKTWDRFQMRIHKRLIDLHSPSEIVKQITSISIEPGVEVEVTIADA</sequence>
<accession>P60866</accession>
<accession>B2R4F4</accession>
<accession>B4DW28</accession>
<accession>P17075</accession>
<accession>Q5M8S9</accession>
<feature type="initiator methionine" description="Removed" evidence="8">
    <location>
        <position position="1"/>
    </location>
</feature>
<feature type="chain" id="PRO_0000146683" description="Small ribosomal subunit protein uS10">
    <location>
        <begin position="2"/>
        <end position="119"/>
    </location>
</feature>
<feature type="modified residue" description="N-acetylalanine" evidence="8">
    <location>
        <position position="2"/>
    </location>
</feature>
<feature type="modified residue" description="N6-succinyllysine; alternate" evidence="1">
    <location>
        <position position="8"/>
    </location>
</feature>
<feature type="modified residue" description="Phosphothreonine" evidence="12 13">
    <location>
        <position position="9"/>
    </location>
</feature>
<feature type="modified residue" description="N6-acetyllysine" evidence="1">
    <location>
        <position position="34"/>
    </location>
</feature>
<feature type="modified residue" description="N6-acetyllysine" evidence="1">
    <location>
        <position position="75"/>
    </location>
</feature>
<feature type="modified residue" description="Phosphoserine" evidence="13">
    <location>
        <position position="93"/>
    </location>
</feature>
<feature type="cross-link" description="Glycyl lysine isopeptide (Lys-Gly) (interchain with G-Cter in ubiquitin)" evidence="3 4 5 6 7">
    <location>
        <position position="4"/>
    </location>
</feature>
<feature type="cross-link" description="Glycyl lysine isopeptide (Lys-Gly) (interchain with G-Cter in ubiquitin); alternate" evidence="3 4 5 6 7">
    <location>
        <position position="8"/>
    </location>
</feature>
<feature type="splice variant" id="VSP_042724" description="In isoform 2." evidence="9">
    <original>VEVTIADA</original>
    <variation>LIESTDAEPMDTEGQQYTLRSVFESPGTCPF</variation>
    <location>
        <begin position="112"/>
        <end position="119"/>
    </location>
</feature>
<feature type="mutagenesis site" description="Enhanced readthrough on the poly(A)-stall sequences; when associated with R-8." evidence="3 4 6 7">
    <original>K</original>
    <variation>R</variation>
    <location>
        <position position="4"/>
    </location>
</feature>
<feature type="mutagenesis site" description="Enhanced readthrough on the poly(A)-stall sequences; when associated with R-4." evidence="3 4 6 7">
    <original>K</original>
    <variation>R</variation>
    <location>
        <position position="8"/>
    </location>
</feature>
<feature type="strand" evidence="14">
    <location>
        <begin position="18"/>
        <end position="27"/>
    </location>
</feature>
<feature type="helix" evidence="14">
    <location>
        <begin position="29"/>
        <end position="45"/>
    </location>
</feature>
<feature type="strand" evidence="14">
    <location>
        <begin position="50"/>
        <end position="55"/>
    </location>
</feature>
<feature type="strand" evidence="14">
    <location>
        <begin position="59"/>
        <end position="67"/>
    </location>
</feature>
<feature type="strand" evidence="14">
    <location>
        <begin position="69"/>
        <end position="71"/>
    </location>
</feature>
<feature type="strand" evidence="14">
    <location>
        <begin position="77"/>
        <end position="93"/>
    </location>
</feature>
<feature type="helix" evidence="14">
    <location>
        <begin position="95"/>
        <end position="97"/>
    </location>
</feature>
<feature type="turn" evidence="14">
    <location>
        <begin position="98"/>
        <end position="104"/>
    </location>
</feature>
<feature type="strand" evidence="14">
    <location>
        <begin position="110"/>
        <end position="117"/>
    </location>
</feature>
<gene>
    <name type="primary">RPS20</name>
</gene>
<organism>
    <name type="scientific">Homo sapiens</name>
    <name type="common">Human</name>
    <dbReference type="NCBI Taxonomy" id="9606"/>
    <lineage>
        <taxon>Eukaryota</taxon>
        <taxon>Metazoa</taxon>
        <taxon>Chordata</taxon>
        <taxon>Craniata</taxon>
        <taxon>Vertebrata</taxon>
        <taxon>Euteleostomi</taxon>
        <taxon>Mammalia</taxon>
        <taxon>Eutheria</taxon>
        <taxon>Euarchontoglires</taxon>
        <taxon>Primates</taxon>
        <taxon>Haplorrhini</taxon>
        <taxon>Catarrhini</taxon>
        <taxon>Hominidae</taxon>
        <taxon>Homo</taxon>
    </lineage>
</organism>
<reference key="1">
    <citation type="journal article" date="1993" name="Nucleic Acids Res.">
        <title>Human ribosomal protein S20 cDNA sequence.</title>
        <authorList>
            <person name="Chu W."/>
            <person name="Presky D.H."/>
            <person name="Swerlick R.A."/>
            <person name="Burns D.K."/>
        </authorList>
    </citation>
    <scope>NUCLEOTIDE SEQUENCE [MRNA] (ISOFORM 1)</scope>
</reference>
<reference key="2">
    <citation type="journal article" date="2002" name="Genome Res.">
        <title>The human ribosomal protein genes: sequencing and comparative analysis of 73 genes.</title>
        <authorList>
            <person name="Yoshihama M."/>
            <person name="Uechi T."/>
            <person name="Asakawa S."/>
            <person name="Kawasaki K."/>
            <person name="Kato S."/>
            <person name="Higa S."/>
            <person name="Maeda N."/>
            <person name="Minoshima S."/>
            <person name="Tanaka T."/>
            <person name="Shimizu N."/>
            <person name="Kenmochi N."/>
        </authorList>
    </citation>
    <scope>NUCLEOTIDE SEQUENCE [GENOMIC DNA]</scope>
</reference>
<reference key="3">
    <citation type="journal article" date="2004" name="Nat. Genet.">
        <title>Complete sequencing and characterization of 21,243 full-length human cDNAs.</title>
        <authorList>
            <person name="Ota T."/>
            <person name="Suzuki Y."/>
            <person name="Nishikawa T."/>
            <person name="Otsuki T."/>
            <person name="Sugiyama T."/>
            <person name="Irie R."/>
            <person name="Wakamatsu A."/>
            <person name="Hayashi K."/>
            <person name="Sato H."/>
            <person name="Nagai K."/>
            <person name="Kimura K."/>
            <person name="Makita H."/>
            <person name="Sekine M."/>
            <person name="Obayashi M."/>
            <person name="Nishi T."/>
            <person name="Shibahara T."/>
            <person name="Tanaka T."/>
            <person name="Ishii S."/>
            <person name="Yamamoto J."/>
            <person name="Saito K."/>
            <person name="Kawai Y."/>
            <person name="Isono Y."/>
            <person name="Nakamura Y."/>
            <person name="Nagahari K."/>
            <person name="Murakami K."/>
            <person name="Yasuda T."/>
            <person name="Iwayanagi T."/>
            <person name="Wagatsuma M."/>
            <person name="Shiratori A."/>
            <person name="Sudo H."/>
            <person name="Hosoiri T."/>
            <person name="Kaku Y."/>
            <person name="Kodaira H."/>
            <person name="Kondo H."/>
            <person name="Sugawara M."/>
            <person name="Takahashi M."/>
            <person name="Kanda K."/>
            <person name="Yokoi T."/>
            <person name="Furuya T."/>
            <person name="Kikkawa E."/>
            <person name="Omura Y."/>
            <person name="Abe K."/>
            <person name="Kamihara K."/>
            <person name="Katsuta N."/>
            <person name="Sato K."/>
            <person name="Tanikawa M."/>
            <person name="Yamazaki M."/>
            <person name="Ninomiya K."/>
            <person name="Ishibashi T."/>
            <person name="Yamashita H."/>
            <person name="Murakawa K."/>
            <person name="Fujimori K."/>
            <person name="Tanai H."/>
            <person name="Kimata M."/>
            <person name="Watanabe M."/>
            <person name="Hiraoka S."/>
            <person name="Chiba Y."/>
            <person name="Ishida S."/>
            <person name="Ono Y."/>
            <person name="Takiguchi S."/>
            <person name="Watanabe S."/>
            <person name="Yosida M."/>
            <person name="Hotuta T."/>
            <person name="Kusano J."/>
            <person name="Kanehori K."/>
            <person name="Takahashi-Fujii A."/>
            <person name="Hara H."/>
            <person name="Tanase T.-O."/>
            <person name="Nomura Y."/>
            <person name="Togiya S."/>
            <person name="Komai F."/>
            <person name="Hara R."/>
            <person name="Takeuchi K."/>
            <person name="Arita M."/>
            <person name="Imose N."/>
            <person name="Musashino K."/>
            <person name="Yuuki H."/>
            <person name="Oshima A."/>
            <person name="Sasaki N."/>
            <person name="Aotsuka S."/>
            <person name="Yoshikawa Y."/>
            <person name="Matsunawa H."/>
            <person name="Ichihara T."/>
            <person name="Shiohata N."/>
            <person name="Sano S."/>
            <person name="Moriya S."/>
            <person name="Momiyama H."/>
            <person name="Satoh N."/>
            <person name="Takami S."/>
            <person name="Terashima Y."/>
            <person name="Suzuki O."/>
            <person name="Nakagawa S."/>
            <person name="Senoh A."/>
            <person name="Mizoguchi H."/>
            <person name="Goto Y."/>
            <person name="Shimizu F."/>
            <person name="Wakebe H."/>
            <person name="Hishigaki H."/>
            <person name="Watanabe T."/>
            <person name="Sugiyama A."/>
            <person name="Takemoto M."/>
            <person name="Kawakami B."/>
            <person name="Yamazaki M."/>
            <person name="Watanabe K."/>
            <person name="Kumagai A."/>
            <person name="Itakura S."/>
            <person name="Fukuzumi Y."/>
            <person name="Fujimori Y."/>
            <person name="Komiyama M."/>
            <person name="Tashiro H."/>
            <person name="Tanigami A."/>
            <person name="Fujiwara T."/>
            <person name="Ono T."/>
            <person name="Yamada K."/>
            <person name="Fujii Y."/>
            <person name="Ozaki K."/>
            <person name="Hirao M."/>
            <person name="Ohmori Y."/>
            <person name="Kawabata A."/>
            <person name="Hikiji T."/>
            <person name="Kobatake N."/>
            <person name="Inagaki H."/>
            <person name="Ikema Y."/>
            <person name="Okamoto S."/>
            <person name="Okitani R."/>
            <person name="Kawakami T."/>
            <person name="Noguchi S."/>
            <person name="Itoh T."/>
            <person name="Shigeta K."/>
            <person name="Senba T."/>
            <person name="Matsumura K."/>
            <person name="Nakajima Y."/>
            <person name="Mizuno T."/>
            <person name="Morinaga M."/>
            <person name="Sasaki M."/>
            <person name="Togashi T."/>
            <person name="Oyama M."/>
            <person name="Hata H."/>
            <person name="Watanabe M."/>
            <person name="Komatsu T."/>
            <person name="Mizushima-Sugano J."/>
            <person name="Satoh T."/>
            <person name="Shirai Y."/>
            <person name="Takahashi Y."/>
            <person name="Nakagawa K."/>
            <person name="Okumura K."/>
            <person name="Nagase T."/>
            <person name="Nomura N."/>
            <person name="Kikuchi H."/>
            <person name="Masuho Y."/>
            <person name="Yamashita R."/>
            <person name="Nakai K."/>
            <person name="Yada T."/>
            <person name="Nakamura Y."/>
            <person name="Ohara O."/>
            <person name="Isogai T."/>
            <person name="Sugano S."/>
        </authorList>
    </citation>
    <scope>NUCLEOTIDE SEQUENCE [LARGE SCALE MRNA] (ISOFORMS 1 AND 2)</scope>
    <source>
        <tissue>Synovium</tissue>
        <tissue>Thymus</tissue>
    </source>
</reference>
<reference key="4">
    <citation type="journal article" date="2006" name="Nature">
        <title>DNA sequence and analysis of human chromosome 8.</title>
        <authorList>
            <person name="Nusbaum C."/>
            <person name="Mikkelsen T.S."/>
            <person name="Zody M.C."/>
            <person name="Asakawa S."/>
            <person name="Taudien S."/>
            <person name="Garber M."/>
            <person name="Kodira C.D."/>
            <person name="Schueler M.G."/>
            <person name="Shimizu A."/>
            <person name="Whittaker C.A."/>
            <person name="Chang J.L."/>
            <person name="Cuomo C.A."/>
            <person name="Dewar K."/>
            <person name="FitzGerald M.G."/>
            <person name="Yang X."/>
            <person name="Allen N.R."/>
            <person name="Anderson S."/>
            <person name="Asakawa T."/>
            <person name="Blechschmidt K."/>
            <person name="Bloom T."/>
            <person name="Borowsky M.L."/>
            <person name="Butler J."/>
            <person name="Cook A."/>
            <person name="Corum B."/>
            <person name="DeArellano K."/>
            <person name="DeCaprio D."/>
            <person name="Dooley K.T."/>
            <person name="Dorris L. III"/>
            <person name="Engels R."/>
            <person name="Gloeckner G."/>
            <person name="Hafez N."/>
            <person name="Hagopian D.S."/>
            <person name="Hall J.L."/>
            <person name="Ishikawa S.K."/>
            <person name="Jaffe D.B."/>
            <person name="Kamat A."/>
            <person name="Kudoh J."/>
            <person name="Lehmann R."/>
            <person name="Lokitsang T."/>
            <person name="Macdonald P."/>
            <person name="Major J.E."/>
            <person name="Matthews C.D."/>
            <person name="Mauceli E."/>
            <person name="Menzel U."/>
            <person name="Mihalev A.H."/>
            <person name="Minoshima S."/>
            <person name="Murayama Y."/>
            <person name="Naylor J.W."/>
            <person name="Nicol R."/>
            <person name="Nguyen C."/>
            <person name="O'Leary S.B."/>
            <person name="O'Neill K."/>
            <person name="Parker S.C.J."/>
            <person name="Polley A."/>
            <person name="Raymond C.K."/>
            <person name="Reichwald K."/>
            <person name="Rodriguez J."/>
            <person name="Sasaki T."/>
            <person name="Schilhabel M."/>
            <person name="Siddiqui R."/>
            <person name="Smith C.L."/>
            <person name="Sneddon T.P."/>
            <person name="Talamas J.A."/>
            <person name="Tenzin P."/>
            <person name="Topham K."/>
            <person name="Venkataraman V."/>
            <person name="Wen G."/>
            <person name="Yamazaki S."/>
            <person name="Young S.K."/>
            <person name="Zeng Q."/>
            <person name="Zimmer A.R."/>
            <person name="Rosenthal A."/>
            <person name="Birren B.W."/>
            <person name="Platzer M."/>
            <person name="Shimizu N."/>
            <person name="Lander E.S."/>
        </authorList>
    </citation>
    <scope>NUCLEOTIDE SEQUENCE [LARGE SCALE GENOMIC DNA]</scope>
</reference>
<reference key="5">
    <citation type="submission" date="2005-07" db="EMBL/GenBank/DDBJ databases">
        <authorList>
            <person name="Mural R.J."/>
            <person name="Istrail S."/>
            <person name="Sutton G.G."/>
            <person name="Florea L."/>
            <person name="Halpern A.L."/>
            <person name="Mobarry C.M."/>
            <person name="Lippert R."/>
            <person name="Walenz B."/>
            <person name="Shatkay H."/>
            <person name="Dew I."/>
            <person name="Miller J.R."/>
            <person name="Flanigan M.J."/>
            <person name="Edwards N.J."/>
            <person name="Bolanos R."/>
            <person name="Fasulo D."/>
            <person name="Halldorsson B.V."/>
            <person name="Hannenhalli S."/>
            <person name="Turner R."/>
            <person name="Yooseph S."/>
            <person name="Lu F."/>
            <person name="Nusskern D.R."/>
            <person name="Shue B.C."/>
            <person name="Zheng X.H."/>
            <person name="Zhong F."/>
            <person name="Delcher A.L."/>
            <person name="Huson D.H."/>
            <person name="Kravitz S.A."/>
            <person name="Mouchard L."/>
            <person name="Reinert K."/>
            <person name="Remington K.A."/>
            <person name="Clark A.G."/>
            <person name="Waterman M.S."/>
            <person name="Eichler E.E."/>
            <person name="Adams M.D."/>
            <person name="Hunkapiller M.W."/>
            <person name="Myers E.W."/>
            <person name="Venter J.C."/>
        </authorList>
    </citation>
    <scope>NUCLEOTIDE SEQUENCE [LARGE SCALE GENOMIC DNA]</scope>
</reference>
<reference key="6">
    <citation type="journal article" date="2004" name="Genome Res.">
        <title>The status, quality, and expansion of the NIH full-length cDNA project: the Mammalian Gene Collection (MGC).</title>
        <authorList>
            <consortium name="The MGC Project Team"/>
        </authorList>
    </citation>
    <scope>NUCLEOTIDE SEQUENCE [LARGE SCALE MRNA] (ISOFORM 1)</scope>
    <source>
        <tissue>Ovary</tissue>
        <tissue>Testis</tissue>
    </source>
</reference>
<reference key="7">
    <citation type="submission" date="2007-07" db="UniProtKB">
        <authorList>
            <person name="Bienvenut W.V."/>
            <person name="Murray L."/>
            <person name="Brunton V.G."/>
            <person name="Frame M.C."/>
        </authorList>
    </citation>
    <scope>PROTEIN SEQUENCE OF 2-19; 35-41 AND 88-99</scope>
    <scope>CLEAVAGE OF INITIATOR METHIONINE</scope>
    <scope>ACETYLATION AT ALA-2</scope>
    <scope>IDENTIFICATION BY MASS SPECTROMETRY</scope>
    <source>
        <tissue>Colon adenocarcinoma</tissue>
    </source>
</reference>
<reference key="8">
    <citation type="journal article" date="1996" name="Eur. J. Biochem.">
        <title>Characterization of the human small-ribosomal-subunit proteins by N-terminal and internal sequencing, and mass spectrometry.</title>
        <authorList>
            <person name="Vladimirov S.N."/>
            <person name="Ivanov A.V."/>
            <person name="Karpova G.G."/>
            <person name="Musolyamov A.K."/>
            <person name="Egorov T.A."/>
            <person name="Thiede B."/>
            <person name="Wittmann-Liebold B."/>
            <person name="Otto A."/>
        </authorList>
    </citation>
    <scope>PROTEIN SEQUENCE OF 9-24</scope>
    <source>
        <tissue>Placenta</tissue>
    </source>
</reference>
<reference key="9">
    <citation type="journal article" date="1998" name="Genome Res.">
        <title>A map of 75 human ribosomal protein genes.</title>
        <authorList>
            <person name="Kenmochi N."/>
            <person name="Kawaguchi T."/>
            <person name="Rozen S."/>
            <person name="Davis E."/>
            <person name="Goodman N."/>
            <person name="Hudson T.J."/>
            <person name="Tanaka T."/>
            <person name="Page D.C."/>
        </authorList>
    </citation>
    <scope>NUCLEOTIDE SEQUENCE [GENOMIC DNA] OF 51-110</scope>
</reference>
<reference key="10">
    <citation type="journal article" date="2010" name="Sci. Signal.">
        <title>Quantitative phosphoproteomics reveals widespread full phosphorylation site occupancy during mitosis.</title>
        <authorList>
            <person name="Olsen J.V."/>
            <person name="Vermeulen M."/>
            <person name="Santamaria A."/>
            <person name="Kumar C."/>
            <person name="Miller M.L."/>
            <person name="Jensen L.J."/>
            <person name="Gnad F."/>
            <person name="Cox J."/>
            <person name="Jensen T.S."/>
            <person name="Nigg E.A."/>
            <person name="Brunak S."/>
            <person name="Mann M."/>
        </authorList>
    </citation>
    <scope>PHOSPHORYLATION [LARGE SCALE ANALYSIS] AT THR-9</scope>
    <scope>IDENTIFICATION BY MASS SPECTROMETRY [LARGE SCALE ANALYSIS]</scope>
    <source>
        <tissue>Cervix carcinoma</tissue>
    </source>
</reference>
<reference key="11">
    <citation type="journal article" date="2011" name="BMC Syst. Biol.">
        <title>Initial characterization of the human central proteome.</title>
        <authorList>
            <person name="Burkard T.R."/>
            <person name="Planyavsky M."/>
            <person name="Kaupe I."/>
            <person name="Breitwieser F.P."/>
            <person name="Buerckstuemmer T."/>
            <person name="Bennett K.L."/>
            <person name="Superti-Furga G."/>
            <person name="Colinge J."/>
        </authorList>
    </citation>
    <scope>IDENTIFICATION BY MASS SPECTROMETRY [LARGE SCALE ANALYSIS]</scope>
</reference>
<reference key="12">
    <citation type="journal article" date="2013" name="J. Proteome Res.">
        <title>Toward a comprehensive characterization of a human cancer cell phosphoproteome.</title>
        <authorList>
            <person name="Zhou H."/>
            <person name="Di Palma S."/>
            <person name="Preisinger C."/>
            <person name="Peng M."/>
            <person name="Polat A.N."/>
            <person name="Heck A.J."/>
            <person name="Mohammed S."/>
        </authorList>
    </citation>
    <scope>PHOSPHORYLATION [LARGE SCALE ANALYSIS] AT THR-9 AND SER-93</scope>
    <scope>IDENTIFICATION BY MASS SPECTROMETRY [LARGE SCALE ANALYSIS]</scope>
    <source>
        <tissue>Cervix carcinoma</tissue>
        <tissue>Erythroleukemia</tissue>
    </source>
</reference>
<reference key="13">
    <citation type="journal article" date="2014" name="Curr. Opin. Struct. Biol.">
        <title>A new system for naming ribosomal proteins.</title>
        <authorList>
            <person name="Ban N."/>
            <person name="Beckmann R."/>
            <person name="Cate J.H.D."/>
            <person name="Dinman J.D."/>
            <person name="Dragon F."/>
            <person name="Ellis S.R."/>
            <person name="Lafontaine D.L.J."/>
            <person name="Lindahl L."/>
            <person name="Liljas A."/>
            <person name="Lipton J.M."/>
            <person name="McAlear M.A."/>
            <person name="Moore P.B."/>
            <person name="Noller H.F."/>
            <person name="Ortega J."/>
            <person name="Panse V.G."/>
            <person name="Ramakrishnan V."/>
            <person name="Spahn C.M.T."/>
            <person name="Steitz T.A."/>
            <person name="Tchorzewski M."/>
            <person name="Tollervey D."/>
            <person name="Warren A.J."/>
            <person name="Williamson J.R."/>
            <person name="Wilson D."/>
            <person name="Yonath A."/>
            <person name="Yusupov M."/>
        </authorList>
    </citation>
    <scope>NOMENCLATURE</scope>
</reference>
<reference key="14">
    <citation type="journal article" date="2014" name="J. Proteomics">
        <title>An enzyme assisted RP-RPLC approach for in-depth analysis of human liver phosphoproteome.</title>
        <authorList>
            <person name="Bian Y."/>
            <person name="Song C."/>
            <person name="Cheng K."/>
            <person name="Dong M."/>
            <person name="Wang F."/>
            <person name="Huang J."/>
            <person name="Sun D."/>
            <person name="Wang L."/>
            <person name="Ye M."/>
            <person name="Zou H."/>
        </authorList>
    </citation>
    <scope>IDENTIFICATION BY MASS SPECTROMETRY [LARGE SCALE ANALYSIS]</scope>
    <source>
        <tissue>Liver</tissue>
    </source>
</reference>
<reference key="15">
    <citation type="journal article" date="2015" name="Proteomics">
        <title>N-terminome analysis of the human mitochondrial proteome.</title>
        <authorList>
            <person name="Vaca Jacome A.S."/>
            <person name="Rabilloud T."/>
            <person name="Schaeffer-Reiss C."/>
            <person name="Rompais M."/>
            <person name="Ayoub D."/>
            <person name="Lane L."/>
            <person name="Bairoch A."/>
            <person name="Van Dorsselaer A."/>
            <person name="Carapito C."/>
        </authorList>
    </citation>
    <scope>IDENTIFICATION BY MASS SPECTROMETRY [LARGE SCALE ANALYSIS]</scope>
</reference>
<reference key="16">
    <citation type="journal article" date="2016" name="Mol. Cell">
        <title>Initiation of quality control during poly(A) translation requires site-specific ribosome ubiquitination.</title>
        <authorList>
            <person name="Juszkiewicz S."/>
            <person name="Hegde R.S."/>
        </authorList>
    </citation>
    <scope>UBIQUITINATION AT LYS-4 AND LYS-8</scope>
    <scope>MUTAGENESIS OF LYS-4 AND LYS-8</scope>
</reference>
<reference key="17">
    <citation type="journal article" date="2017" name="Mol. Cell">
        <title>ZNF598 and RACK1 regulate mammalian ribosome-associated quality control function by mediating regulatory 40S ribosomal ubiquitylation.</title>
        <authorList>
            <person name="Sundaramoorthy E."/>
            <person name="Leonard M."/>
            <person name="Mak R."/>
            <person name="Liao J."/>
            <person name="Fulzele A."/>
            <person name="Bennett E.J."/>
        </authorList>
    </citation>
    <scope>UBIQUITINATION AT LYS-4 AND LYS-8</scope>
    <scope>MUTAGENESIS OF LYS-4 AND LYS-8</scope>
</reference>
<reference key="18">
    <citation type="journal article" date="2017" name="Nat. Commun.">
        <title>The E3 ubiquitin ligase and RNA-binding protein ZNF598 orchestrates ribosome quality control of premature polyadenylated mRNAs.</title>
        <authorList>
            <person name="Garzia A."/>
            <person name="Jafarnejad S.M."/>
            <person name="Meyer C."/>
            <person name="Chapat C."/>
            <person name="Gogakos T."/>
            <person name="Morozov P."/>
            <person name="Amiri M."/>
            <person name="Shapiro M."/>
            <person name="Molina H."/>
            <person name="Tuschl T."/>
            <person name="Sonenberg N."/>
        </authorList>
    </citation>
    <scope>UBIQUITINATION AT LYS-4 AND LYS-8</scope>
</reference>
<reference key="19">
    <citation type="journal article" date="2020" name="Elife">
        <title>Distinct regulatory ribosomal ubiquitylation events are reversible and hierarchically organized.</title>
        <authorList>
            <person name="Garshott D.M."/>
            <person name="Sundaramoorthy E."/>
            <person name="Leonard M."/>
            <person name="Bennett E.J."/>
        </authorList>
    </citation>
    <scope>UBIQUITINATION AT LYS-4 AND LYS-8</scope>
    <scope>MUTAGENESIS OF LYS-4 AND LYS-8</scope>
</reference>
<reference key="20">
    <citation type="journal article" date="2022" name="Nat. Commun.">
        <title>A distinct mammalian disome collision interface harbors K63-linked polyubiquitination of uS10 to trigger hRQT-mediated subunit dissociation.</title>
        <authorList>
            <person name="Narita M."/>
            <person name="Denk T."/>
            <person name="Matsuo Y."/>
            <person name="Sugiyama T."/>
            <person name="Kikuguchi C."/>
            <person name="Ito S."/>
            <person name="Sato N."/>
            <person name="Suzuki T."/>
            <person name="Hashimoto S."/>
            <person name="Machova I."/>
            <person name="Tesina P."/>
            <person name="Beckmann R."/>
            <person name="Inada T."/>
        </authorList>
    </citation>
    <scope>UBIQUITINATION AT LYS-4 AND LYS-8</scope>
    <scope>MUTAGENESIS OF LYS-4 AND LYS-8</scope>
</reference>
<reference key="21">
    <citation type="journal article" date="2013" name="Nature">
        <title>Structures of the human and Drosophila 80S ribosome.</title>
        <authorList>
            <person name="Anger A.M."/>
            <person name="Armache J.P."/>
            <person name="Berninghausen O."/>
            <person name="Habeck M."/>
            <person name="Subklewe M."/>
            <person name="Wilson D.N."/>
            <person name="Beckmann R."/>
        </authorList>
    </citation>
    <scope>STRUCTURE BY ELECTRON MICROSCOPY (5.0 ANGSTROMS) OF RIBOSOME</scope>
    <scope>FUNCTION</scope>
    <scope>SUBUNIT</scope>
    <scope>SUBCELLULAR LOCATION</scope>
</reference>
<dbReference type="EMBL" id="L06498">
    <property type="protein sequence ID" value="AAA60286.1"/>
    <property type="molecule type" value="mRNA"/>
</dbReference>
<dbReference type="EMBL" id="AB061842">
    <property type="protein sequence ID" value="BAB79480.1"/>
    <property type="molecule type" value="Genomic_DNA"/>
</dbReference>
<dbReference type="EMBL" id="AK301342">
    <property type="protein sequence ID" value="BAG62890.1"/>
    <property type="molecule type" value="mRNA"/>
</dbReference>
<dbReference type="EMBL" id="AK311808">
    <property type="protein sequence ID" value="BAG34751.1"/>
    <property type="molecule type" value="mRNA"/>
</dbReference>
<dbReference type="EMBL" id="AC107376">
    <property type="status" value="NOT_ANNOTATED_CDS"/>
    <property type="molecule type" value="Genomic_DNA"/>
</dbReference>
<dbReference type="EMBL" id="CH471068">
    <property type="protein sequence ID" value="EAW86771.1"/>
    <property type="molecule type" value="Genomic_DNA"/>
</dbReference>
<dbReference type="EMBL" id="CH471068">
    <property type="protein sequence ID" value="EAW86772.1"/>
    <property type="molecule type" value="Genomic_DNA"/>
</dbReference>
<dbReference type="EMBL" id="BC007507">
    <property type="protein sequence ID" value="AAH07507.1"/>
    <property type="molecule type" value="mRNA"/>
</dbReference>
<dbReference type="EMBL" id="BC087850">
    <property type="protein sequence ID" value="AAH87850.1"/>
    <property type="molecule type" value="mRNA"/>
</dbReference>
<dbReference type="EMBL" id="AB007156">
    <property type="protein sequence ID" value="BAA25820.1"/>
    <property type="molecule type" value="Genomic_DNA"/>
</dbReference>
<dbReference type="CCDS" id="CCDS55231.1">
    <molecule id="P60866-2"/>
</dbReference>
<dbReference type="CCDS" id="CCDS6163.1">
    <molecule id="P60866-1"/>
</dbReference>
<dbReference type="PIR" id="S33710">
    <property type="entry name" value="S33710"/>
</dbReference>
<dbReference type="RefSeq" id="NP_001014.1">
    <molecule id="P60866-1"/>
    <property type="nucleotide sequence ID" value="NM_001023.4"/>
</dbReference>
<dbReference type="RefSeq" id="NP_001139699.1">
    <molecule id="P60866-2"/>
    <property type="nucleotide sequence ID" value="NM_001146227.3"/>
</dbReference>
<dbReference type="PDB" id="4UG0">
    <property type="method" value="EM"/>
    <property type="chains" value="SU=1-119"/>
</dbReference>
<dbReference type="PDB" id="4V6X">
    <property type="method" value="EM"/>
    <property type="resolution" value="5.00 A"/>
    <property type="chains" value="AU=1-119"/>
</dbReference>
<dbReference type="PDB" id="5A2Q">
    <property type="method" value="EM"/>
    <property type="resolution" value="3.90 A"/>
    <property type="chains" value="U=1-119"/>
</dbReference>
<dbReference type="PDB" id="5AJ0">
    <property type="method" value="EM"/>
    <property type="resolution" value="3.50 A"/>
    <property type="chains" value="BU=1-119"/>
</dbReference>
<dbReference type="PDB" id="5FLX">
    <property type="method" value="EM"/>
    <property type="resolution" value="3.90 A"/>
    <property type="chains" value="U=1-119"/>
</dbReference>
<dbReference type="PDB" id="5LKS">
    <property type="method" value="EM"/>
    <property type="resolution" value="3.60 A"/>
    <property type="chains" value="SU=1-119"/>
</dbReference>
<dbReference type="PDB" id="5OA3">
    <property type="method" value="EM"/>
    <property type="resolution" value="4.30 A"/>
    <property type="chains" value="U=1-119"/>
</dbReference>
<dbReference type="PDB" id="5T2C">
    <property type="method" value="EM"/>
    <property type="resolution" value="3.60 A"/>
    <property type="chains" value="AB=1-119"/>
</dbReference>
<dbReference type="PDB" id="5VYC">
    <property type="method" value="X-ray"/>
    <property type="resolution" value="6.00 A"/>
    <property type="chains" value="U1/U2/U3/U4/U5/U6=1-119"/>
</dbReference>
<dbReference type="PDB" id="6FEC">
    <property type="method" value="EM"/>
    <property type="resolution" value="6.30 A"/>
    <property type="chains" value="h=16-119"/>
</dbReference>
<dbReference type="PDB" id="6G51">
    <property type="method" value="EM"/>
    <property type="resolution" value="4.10 A"/>
    <property type="chains" value="U=1-119"/>
</dbReference>
<dbReference type="PDB" id="6G53">
    <property type="method" value="EM"/>
    <property type="resolution" value="4.50 A"/>
    <property type="chains" value="U=1-119"/>
</dbReference>
<dbReference type="PDB" id="6G5H">
    <property type="method" value="EM"/>
    <property type="resolution" value="3.60 A"/>
    <property type="chains" value="U=1-119"/>
</dbReference>
<dbReference type="PDB" id="6G5I">
    <property type="method" value="EM"/>
    <property type="resolution" value="3.50 A"/>
    <property type="chains" value="U=1-119"/>
</dbReference>
<dbReference type="PDB" id="6IP5">
    <property type="method" value="EM"/>
    <property type="resolution" value="3.90 A"/>
    <property type="chains" value="21=1-119"/>
</dbReference>
<dbReference type="PDB" id="6IP6">
    <property type="method" value="EM"/>
    <property type="resolution" value="4.50 A"/>
    <property type="chains" value="21=1-119"/>
</dbReference>
<dbReference type="PDB" id="6IP8">
    <property type="method" value="EM"/>
    <property type="resolution" value="3.90 A"/>
    <property type="chains" value="21=1-119"/>
</dbReference>
<dbReference type="PDB" id="6OLE">
    <property type="method" value="EM"/>
    <property type="resolution" value="3.10 A"/>
    <property type="chains" value="SU=16-119"/>
</dbReference>
<dbReference type="PDB" id="6OLF">
    <property type="method" value="EM"/>
    <property type="resolution" value="3.90 A"/>
    <property type="chains" value="SU=16-119"/>
</dbReference>
<dbReference type="PDB" id="6OLG">
    <property type="method" value="EM"/>
    <property type="resolution" value="3.40 A"/>
    <property type="chains" value="BU=20-116"/>
</dbReference>
<dbReference type="PDB" id="6OLI">
    <property type="method" value="EM"/>
    <property type="resolution" value="3.50 A"/>
    <property type="chains" value="SU=16-119"/>
</dbReference>
<dbReference type="PDB" id="6OLZ">
    <property type="method" value="EM"/>
    <property type="resolution" value="3.90 A"/>
    <property type="chains" value="BU=20-116"/>
</dbReference>
<dbReference type="PDB" id="6OM0">
    <property type="method" value="EM"/>
    <property type="resolution" value="3.10 A"/>
    <property type="chains" value="SU=16-119"/>
</dbReference>
<dbReference type="PDB" id="6OM7">
    <property type="method" value="EM"/>
    <property type="resolution" value="3.70 A"/>
    <property type="chains" value="SU=16-119"/>
</dbReference>
<dbReference type="PDB" id="6QZP">
    <property type="method" value="EM"/>
    <property type="resolution" value="2.90 A"/>
    <property type="chains" value="SU=17-119"/>
</dbReference>
<dbReference type="PDB" id="6XA1">
    <property type="method" value="EM"/>
    <property type="resolution" value="2.80 A"/>
    <property type="chains" value="SU=17-116"/>
</dbReference>
<dbReference type="PDB" id="6Y0G">
    <property type="method" value="EM"/>
    <property type="resolution" value="3.20 A"/>
    <property type="chains" value="SU=1-119"/>
</dbReference>
<dbReference type="PDB" id="6Y2L">
    <property type="method" value="EM"/>
    <property type="resolution" value="3.00 A"/>
    <property type="chains" value="SU=1-119"/>
</dbReference>
<dbReference type="PDB" id="6Y57">
    <property type="method" value="EM"/>
    <property type="resolution" value="3.50 A"/>
    <property type="chains" value="SU=1-119"/>
</dbReference>
<dbReference type="PDB" id="6YBS">
    <property type="method" value="EM"/>
    <property type="resolution" value="3.10 A"/>
    <property type="chains" value="h=1-119"/>
</dbReference>
<dbReference type="PDB" id="6Z6L">
    <property type="method" value="EM"/>
    <property type="resolution" value="3.00 A"/>
    <property type="chains" value="SU=1-119"/>
</dbReference>
<dbReference type="PDB" id="6Z6M">
    <property type="method" value="EM"/>
    <property type="resolution" value="3.10 A"/>
    <property type="chains" value="SU=1-119"/>
</dbReference>
<dbReference type="PDB" id="6Z6N">
    <property type="method" value="EM"/>
    <property type="resolution" value="2.90 A"/>
    <property type="chains" value="SU=1-119"/>
</dbReference>
<dbReference type="PDB" id="6ZLW">
    <property type="method" value="EM"/>
    <property type="resolution" value="2.60 A"/>
    <property type="chains" value="V=1-119"/>
</dbReference>
<dbReference type="PDB" id="6ZM7">
    <property type="method" value="EM"/>
    <property type="resolution" value="2.70 A"/>
    <property type="chains" value="SU=1-119"/>
</dbReference>
<dbReference type="PDB" id="6ZME">
    <property type="method" value="EM"/>
    <property type="resolution" value="3.00 A"/>
    <property type="chains" value="SU=1-119"/>
</dbReference>
<dbReference type="PDB" id="6ZMI">
    <property type="method" value="EM"/>
    <property type="resolution" value="2.60 A"/>
    <property type="chains" value="SU=1-119"/>
</dbReference>
<dbReference type="PDB" id="6ZMO">
    <property type="method" value="EM"/>
    <property type="resolution" value="3.10 A"/>
    <property type="chains" value="SU=1-119"/>
</dbReference>
<dbReference type="PDB" id="6ZMT">
    <property type="method" value="EM"/>
    <property type="resolution" value="3.00 A"/>
    <property type="chains" value="V=1-119"/>
</dbReference>
<dbReference type="PDB" id="6ZMW">
    <property type="method" value="EM"/>
    <property type="resolution" value="3.70 A"/>
    <property type="chains" value="h=1-119"/>
</dbReference>
<dbReference type="PDB" id="6ZN5">
    <property type="method" value="EM"/>
    <property type="resolution" value="3.20 A"/>
    <property type="chains" value="V=17-117"/>
</dbReference>
<dbReference type="PDB" id="6ZOJ">
    <property type="method" value="EM"/>
    <property type="resolution" value="2.80 A"/>
    <property type="chains" value="U=1-119"/>
</dbReference>
<dbReference type="PDB" id="6ZOL">
    <property type="method" value="EM"/>
    <property type="resolution" value="2.80 A"/>
    <property type="chains" value="U=1-119"/>
</dbReference>
<dbReference type="PDB" id="6ZON">
    <property type="method" value="EM"/>
    <property type="resolution" value="3.00 A"/>
    <property type="chains" value="h=1-119"/>
</dbReference>
<dbReference type="PDB" id="6ZP4">
    <property type="method" value="EM"/>
    <property type="resolution" value="2.90 A"/>
    <property type="chains" value="h=1-119"/>
</dbReference>
<dbReference type="PDB" id="6ZUO">
    <property type="method" value="EM"/>
    <property type="resolution" value="3.10 A"/>
    <property type="chains" value="U=1-119"/>
</dbReference>
<dbReference type="PDB" id="6ZV6">
    <property type="method" value="EM"/>
    <property type="resolution" value="2.90 A"/>
    <property type="chains" value="U=1-119"/>
</dbReference>
<dbReference type="PDB" id="6ZVH">
    <property type="method" value="EM"/>
    <property type="resolution" value="2.90 A"/>
    <property type="chains" value="U=16-119"/>
</dbReference>
<dbReference type="PDB" id="6ZVJ">
    <property type="method" value="EM"/>
    <property type="resolution" value="3.80 A"/>
    <property type="chains" value="h=19-116"/>
</dbReference>
<dbReference type="PDB" id="6ZXD">
    <property type="method" value="EM"/>
    <property type="resolution" value="3.20 A"/>
    <property type="chains" value="U=1-119"/>
</dbReference>
<dbReference type="PDB" id="6ZXE">
    <property type="method" value="EM"/>
    <property type="resolution" value="3.00 A"/>
    <property type="chains" value="U=1-119"/>
</dbReference>
<dbReference type="PDB" id="6ZXF">
    <property type="method" value="EM"/>
    <property type="resolution" value="3.70 A"/>
    <property type="chains" value="U=1-119"/>
</dbReference>
<dbReference type="PDB" id="6ZXG">
    <property type="method" value="EM"/>
    <property type="resolution" value="2.60 A"/>
    <property type="chains" value="U=1-119"/>
</dbReference>
<dbReference type="PDB" id="6ZXH">
    <property type="method" value="EM"/>
    <property type="resolution" value="2.70 A"/>
    <property type="chains" value="U=1-119"/>
</dbReference>
<dbReference type="PDB" id="7A09">
    <property type="method" value="EM"/>
    <property type="resolution" value="3.50 A"/>
    <property type="chains" value="h=1-119"/>
</dbReference>
<dbReference type="PDB" id="7K5I">
    <property type="method" value="EM"/>
    <property type="resolution" value="2.90 A"/>
    <property type="chains" value="U=1-119"/>
</dbReference>
<dbReference type="PDB" id="7QP6">
    <property type="method" value="EM"/>
    <property type="resolution" value="4.70 A"/>
    <property type="chains" value="h=1-119"/>
</dbReference>
<dbReference type="PDB" id="7QP7">
    <property type="method" value="EM"/>
    <property type="resolution" value="3.70 A"/>
    <property type="chains" value="h=1-119"/>
</dbReference>
<dbReference type="PDB" id="7R4X">
    <property type="method" value="EM"/>
    <property type="resolution" value="2.15 A"/>
    <property type="chains" value="U=1-119"/>
</dbReference>
<dbReference type="PDB" id="7TQL">
    <property type="method" value="EM"/>
    <property type="resolution" value="3.40 A"/>
    <property type="chains" value="V=17-117"/>
</dbReference>
<dbReference type="PDB" id="7XNX">
    <property type="method" value="EM"/>
    <property type="resolution" value="2.70 A"/>
    <property type="chains" value="SU=1-119"/>
</dbReference>
<dbReference type="PDB" id="7XNY">
    <property type="method" value="EM"/>
    <property type="resolution" value="2.50 A"/>
    <property type="chains" value="SU=1-119"/>
</dbReference>
<dbReference type="PDB" id="8G5Y">
    <property type="method" value="EM"/>
    <property type="resolution" value="2.29 A"/>
    <property type="chains" value="SU=1-119"/>
</dbReference>
<dbReference type="PDB" id="8G60">
    <property type="method" value="EM"/>
    <property type="resolution" value="2.54 A"/>
    <property type="chains" value="SU=1-119"/>
</dbReference>
<dbReference type="PDB" id="8G61">
    <property type="method" value="EM"/>
    <property type="resolution" value="2.94 A"/>
    <property type="chains" value="SU=1-119"/>
</dbReference>
<dbReference type="PDB" id="8G6J">
    <property type="method" value="EM"/>
    <property type="resolution" value="2.80 A"/>
    <property type="chains" value="SU=1-119"/>
</dbReference>
<dbReference type="PDB" id="8GLP">
    <property type="method" value="EM"/>
    <property type="resolution" value="1.67 A"/>
    <property type="chains" value="SU=1-119"/>
</dbReference>
<dbReference type="PDB" id="8IFD">
    <property type="method" value="EM"/>
    <property type="resolution" value="2.59 A"/>
    <property type="chains" value="21=1-119"/>
</dbReference>
<dbReference type="PDB" id="8IFE">
    <property type="method" value="EM"/>
    <property type="resolution" value="2.57 A"/>
    <property type="chains" value="21=1-119"/>
</dbReference>
<dbReference type="PDB" id="8JDJ">
    <property type="method" value="EM"/>
    <property type="resolution" value="2.50 A"/>
    <property type="chains" value="AG=1-119"/>
</dbReference>
<dbReference type="PDB" id="8JDK">
    <property type="method" value="EM"/>
    <property type="resolution" value="2.26 A"/>
    <property type="chains" value="AG=1-119"/>
</dbReference>
<dbReference type="PDB" id="8JDL">
    <property type="method" value="EM"/>
    <property type="resolution" value="2.42 A"/>
    <property type="chains" value="AG=1-119"/>
</dbReference>
<dbReference type="PDB" id="8JDM">
    <property type="method" value="EM"/>
    <property type="resolution" value="2.67 A"/>
    <property type="chains" value="AG=1-119"/>
</dbReference>
<dbReference type="PDB" id="8K2C">
    <property type="method" value="EM"/>
    <property type="resolution" value="2.40 A"/>
    <property type="chains" value="SU=1-119"/>
</dbReference>
<dbReference type="PDB" id="8OZ0">
    <property type="method" value="EM"/>
    <property type="resolution" value="3.50 A"/>
    <property type="chains" value="w=1-119"/>
</dbReference>
<dbReference type="PDB" id="8PJ1">
    <property type="method" value="EM"/>
    <property type="resolution" value="3.40 A"/>
    <property type="chains" value="h=1-119"/>
</dbReference>
<dbReference type="PDB" id="8PJ2">
    <property type="method" value="EM"/>
    <property type="resolution" value="3.40 A"/>
    <property type="chains" value="h=1-119"/>
</dbReference>
<dbReference type="PDB" id="8PJ3">
    <property type="method" value="EM"/>
    <property type="resolution" value="3.70 A"/>
    <property type="chains" value="h=1-119"/>
</dbReference>
<dbReference type="PDB" id="8PJ4">
    <property type="method" value="EM"/>
    <property type="resolution" value="3.20 A"/>
    <property type="chains" value="h=1-119"/>
</dbReference>
<dbReference type="PDB" id="8PJ5">
    <property type="method" value="EM"/>
    <property type="resolution" value="2.90 A"/>
    <property type="chains" value="h=1-119"/>
</dbReference>
<dbReference type="PDB" id="8PJ6">
    <property type="method" value="EM"/>
    <property type="resolution" value="2.90 A"/>
    <property type="chains" value="h=1-119"/>
</dbReference>
<dbReference type="PDB" id="8PPK">
    <property type="method" value="EM"/>
    <property type="resolution" value="2.98 A"/>
    <property type="chains" value="U=1-119"/>
</dbReference>
<dbReference type="PDB" id="8PPL">
    <property type="method" value="EM"/>
    <property type="resolution" value="2.65 A"/>
    <property type="chains" value="AU=1-119"/>
</dbReference>
<dbReference type="PDB" id="8QOI">
    <property type="method" value="EM"/>
    <property type="resolution" value="1.90 A"/>
    <property type="chains" value="SU=1-119"/>
</dbReference>
<dbReference type="PDB" id="8T4S">
    <property type="method" value="EM"/>
    <property type="resolution" value="2.60 A"/>
    <property type="chains" value="U=1-119"/>
</dbReference>
<dbReference type="PDB" id="8UKB">
    <property type="method" value="EM"/>
    <property type="resolution" value="3.05 A"/>
    <property type="chains" value="SU=16-119"/>
</dbReference>
<dbReference type="PDB" id="8XP2">
    <property type="method" value="EM"/>
    <property type="resolution" value="3.20 A"/>
    <property type="chains" value="SU=1-119"/>
</dbReference>
<dbReference type="PDB" id="8XP3">
    <property type="method" value="EM"/>
    <property type="resolution" value="3.40 A"/>
    <property type="chains" value="SU=1-119"/>
</dbReference>
<dbReference type="PDB" id="8XSX">
    <property type="method" value="EM"/>
    <property type="resolution" value="2.40 A"/>
    <property type="chains" value="SU=1-119"/>
</dbReference>
<dbReference type="PDB" id="8XSY">
    <property type="method" value="EM"/>
    <property type="resolution" value="3.00 A"/>
    <property type="chains" value="SU=1-119"/>
</dbReference>
<dbReference type="PDB" id="8XSZ">
    <property type="method" value="EM"/>
    <property type="resolution" value="3.20 A"/>
    <property type="chains" value="SU=1-119"/>
</dbReference>
<dbReference type="PDB" id="8XXL">
    <property type="method" value="EM"/>
    <property type="resolution" value="2.90 A"/>
    <property type="chains" value="SU=1-119"/>
</dbReference>
<dbReference type="PDB" id="8XXM">
    <property type="method" value="EM"/>
    <property type="resolution" value="3.20 A"/>
    <property type="chains" value="SU=1-119"/>
</dbReference>
<dbReference type="PDB" id="8XXN">
    <property type="method" value="EM"/>
    <property type="resolution" value="3.60 A"/>
    <property type="chains" value="SU=1-119"/>
</dbReference>
<dbReference type="PDB" id="8Y0W">
    <property type="method" value="EM"/>
    <property type="resolution" value="3.40 A"/>
    <property type="chains" value="SU=1-119"/>
</dbReference>
<dbReference type="PDB" id="8Y0X">
    <property type="method" value="EM"/>
    <property type="resolution" value="3.30 A"/>
    <property type="chains" value="SU=1-119"/>
</dbReference>
<dbReference type="PDB" id="8YOO">
    <property type="method" value="EM"/>
    <property type="resolution" value="2.00 A"/>
    <property type="chains" value="SU=1-119"/>
</dbReference>
<dbReference type="PDB" id="8YOP">
    <property type="method" value="EM"/>
    <property type="resolution" value="2.20 A"/>
    <property type="chains" value="SU=1-119"/>
</dbReference>
<dbReference type="PDB" id="8ZDB">
    <property type="method" value="EM"/>
    <property type="resolution" value="3.60 A"/>
    <property type="chains" value="U=1-119"/>
</dbReference>
<dbReference type="PDB" id="8ZDC">
    <property type="method" value="EM"/>
    <property type="resolution" value="3.80 A"/>
    <property type="chains" value="U=1-119"/>
</dbReference>
<dbReference type="PDB" id="8ZDD">
    <property type="method" value="EM"/>
    <property type="resolution" value="3.70 A"/>
    <property type="chains" value="U=1-119"/>
</dbReference>
<dbReference type="PDB" id="9BKD">
    <property type="method" value="EM"/>
    <property type="resolution" value="2.60 A"/>
    <property type="chains" value="h=1-119"/>
</dbReference>
<dbReference type="PDB" id="9BLN">
    <property type="method" value="EM"/>
    <property type="resolution" value="3.90 A"/>
    <property type="chains" value="h=1-119"/>
</dbReference>
<dbReference type="PDB" id="9C3H">
    <property type="method" value="EM"/>
    <property type="resolution" value="2.00 A"/>
    <property type="chains" value="SZ=1-119"/>
</dbReference>
<dbReference type="PDB" id="9G8M">
    <property type="method" value="EM"/>
    <property type="resolution" value="3.30 A"/>
    <property type="chains" value="SU=1-119"/>
</dbReference>
<dbReference type="PDB" id="9G8O">
    <property type="method" value="EM"/>
    <property type="resolution" value="3.40 A"/>
    <property type="chains" value="SU=1-119"/>
</dbReference>
<dbReference type="PDBsum" id="4UG0"/>
<dbReference type="PDBsum" id="4V6X"/>
<dbReference type="PDBsum" id="5A2Q"/>
<dbReference type="PDBsum" id="5AJ0"/>
<dbReference type="PDBsum" id="5FLX"/>
<dbReference type="PDBsum" id="5LKS"/>
<dbReference type="PDBsum" id="5OA3"/>
<dbReference type="PDBsum" id="5T2C"/>
<dbReference type="PDBsum" id="5VYC"/>
<dbReference type="PDBsum" id="6FEC"/>
<dbReference type="PDBsum" id="6G51"/>
<dbReference type="PDBsum" id="6G53"/>
<dbReference type="PDBsum" id="6G5H"/>
<dbReference type="PDBsum" id="6G5I"/>
<dbReference type="PDBsum" id="6IP5"/>
<dbReference type="PDBsum" id="6IP6"/>
<dbReference type="PDBsum" id="6IP8"/>
<dbReference type="PDBsum" id="6OLE"/>
<dbReference type="PDBsum" id="6OLF"/>
<dbReference type="PDBsum" id="6OLG"/>
<dbReference type="PDBsum" id="6OLI"/>
<dbReference type="PDBsum" id="6OLZ"/>
<dbReference type="PDBsum" id="6OM0"/>
<dbReference type="PDBsum" id="6OM7"/>
<dbReference type="PDBsum" id="6QZP"/>
<dbReference type="PDBsum" id="6XA1"/>
<dbReference type="PDBsum" id="6Y0G"/>
<dbReference type="PDBsum" id="6Y2L"/>
<dbReference type="PDBsum" id="6Y57"/>
<dbReference type="PDBsum" id="6YBS"/>
<dbReference type="PDBsum" id="6Z6L"/>
<dbReference type="PDBsum" id="6Z6M"/>
<dbReference type="PDBsum" id="6Z6N"/>
<dbReference type="PDBsum" id="6ZLW"/>
<dbReference type="PDBsum" id="6ZM7"/>
<dbReference type="PDBsum" id="6ZME"/>
<dbReference type="PDBsum" id="6ZMI"/>
<dbReference type="PDBsum" id="6ZMO"/>
<dbReference type="PDBsum" id="6ZMT"/>
<dbReference type="PDBsum" id="6ZMW"/>
<dbReference type="PDBsum" id="6ZN5"/>
<dbReference type="PDBsum" id="6ZOJ"/>
<dbReference type="PDBsum" id="6ZOL"/>
<dbReference type="PDBsum" id="6ZON"/>
<dbReference type="PDBsum" id="6ZP4"/>
<dbReference type="PDBsum" id="6ZUO"/>
<dbReference type="PDBsum" id="6ZV6"/>
<dbReference type="PDBsum" id="6ZVH"/>
<dbReference type="PDBsum" id="6ZVJ"/>
<dbReference type="PDBsum" id="6ZXD"/>
<dbReference type="PDBsum" id="6ZXE"/>
<dbReference type="PDBsum" id="6ZXF"/>
<dbReference type="PDBsum" id="6ZXG"/>
<dbReference type="PDBsum" id="6ZXH"/>
<dbReference type="PDBsum" id="7A09"/>
<dbReference type="PDBsum" id="7K5I"/>
<dbReference type="PDBsum" id="7QP6"/>
<dbReference type="PDBsum" id="7QP7"/>
<dbReference type="PDBsum" id="7R4X"/>
<dbReference type="PDBsum" id="7TQL"/>
<dbReference type="PDBsum" id="7XNX"/>
<dbReference type="PDBsum" id="7XNY"/>
<dbReference type="PDBsum" id="8G5Y"/>
<dbReference type="PDBsum" id="8G60"/>
<dbReference type="PDBsum" id="8G61"/>
<dbReference type="PDBsum" id="8G6J"/>
<dbReference type="PDBsum" id="8GLP"/>
<dbReference type="PDBsum" id="8IFD"/>
<dbReference type="PDBsum" id="8IFE"/>
<dbReference type="PDBsum" id="8JDJ"/>
<dbReference type="PDBsum" id="8JDK"/>
<dbReference type="PDBsum" id="8JDL"/>
<dbReference type="PDBsum" id="8JDM"/>
<dbReference type="PDBsum" id="8K2C"/>
<dbReference type="PDBsum" id="8OZ0"/>
<dbReference type="PDBsum" id="8PJ1"/>
<dbReference type="PDBsum" id="8PJ2"/>
<dbReference type="PDBsum" id="8PJ3"/>
<dbReference type="PDBsum" id="8PJ4"/>
<dbReference type="PDBsum" id="8PJ5"/>
<dbReference type="PDBsum" id="8PJ6"/>
<dbReference type="PDBsum" id="8PPK"/>
<dbReference type="PDBsum" id="8PPL"/>
<dbReference type="PDBsum" id="8QOI"/>
<dbReference type="PDBsum" id="8T4S"/>
<dbReference type="PDBsum" id="8UKB"/>
<dbReference type="PDBsum" id="8XP2"/>
<dbReference type="PDBsum" id="8XP3"/>
<dbReference type="PDBsum" id="8XSX"/>
<dbReference type="PDBsum" id="8XSY"/>
<dbReference type="PDBsum" id="8XSZ"/>
<dbReference type="PDBsum" id="8XXL"/>
<dbReference type="PDBsum" id="8XXM"/>
<dbReference type="PDBsum" id="8XXN"/>
<dbReference type="PDBsum" id="8Y0W"/>
<dbReference type="PDBsum" id="8Y0X"/>
<dbReference type="PDBsum" id="8YOO"/>
<dbReference type="PDBsum" id="8YOP"/>
<dbReference type="PDBsum" id="8ZDB"/>
<dbReference type="PDBsum" id="8ZDC"/>
<dbReference type="PDBsum" id="8ZDD"/>
<dbReference type="PDBsum" id="9BKD"/>
<dbReference type="PDBsum" id="9BLN"/>
<dbReference type="PDBsum" id="9C3H"/>
<dbReference type="PDBsum" id="9G8M"/>
<dbReference type="PDBsum" id="9G8O"/>
<dbReference type="EMDB" id="EMD-10668"/>
<dbReference type="EMDB" id="EMD-10674"/>
<dbReference type="EMDB" id="EMD-10690"/>
<dbReference type="EMDB" id="EMD-10772"/>
<dbReference type="EMDB" id="EMD-11098"/>
<dbReference type="EMDB" id="EMD-11099"/>
<dbReference type="EMDB" id="EMD-11100"/>
<dbReference type="EMDB" id="EMD-11276"/>
<dbReference type="EMDB" id="EMD-11288"/>
<dbReference type="EMDB" id="EMD-11289"/>
<dbReference type="EMDB" id="EMD-11292"/>
<dbReference type="EMDB" id="EMD-11299"/>
<dbReference type="EMDB" id="EMD-11301"/>
<dbReference type="EMDB" id="EMD-11302"/>
<dbReference type="EMDB" id="EMD-11310"/>
<dbReference type="EMDB" id="EMD-11320"/>
<dbReference type="EMDB" id="EMD-11322"/>
<dbReference type="EMDB" id="EMD-11325"/>
<dbReference type="EMDB" id="EMD-11335"/>
<dbReference type="EMDB" id="EMD-11440"/>
<dbReference type="EMDB" id="EMD-11441"/>
<dbReference type="EMDB" id="EMD-11456"/>
<dbReference type="EMDB" id="EMD-11458"/>
<dbReference type="EMDB" id="EMD-11517"/>
<dbReference type="EMDB" id="EMD-11518"/>
<dbReference type="EMDB" id="EMD-11519"/>
<dbReference type="EMDB" id="EMD-11520"/>
<dbReference type="EMDB" id="EMD-11521"/>
<dbReference type="EMDB" id="EMD-11602"/>
<dbReference type="EMDB" id="EMD-14113"/>
<dbReference type="EMDB" id="EMD-14114"/>
<dbReference type="EMDB" id="EMD-14317"/>
<dbReference type="EMDB" id="EMD-17297"/>
<dbReference type="EMDB" id="EMD-17696"/>
<dbReference type="EMDB" id="EMD-17697"/>
<dbReference type="EMDB" id="EMD-17698"/>
<dbReference type="EMDB" id="EMD-17699"/>
<dbReference type="EMDB" id="EMD-17700"/>
<dbReference type="EMDB" id="EMD-17701"/>
<dbReference type="EMDB" id="EMD-17804"/>
<dbReference type="EMDB" id="EMD-17805"/>
<dbReference type="EMDB" id="EMD-18539"/>
<dbReference type="EMDB" id="EMD-22681"/>
<dbReference type="EMDB" id="EMD-26067"/>
<dbReference type="EMDB" id="EMD-29757"/>
<dbReference type="EMDB" id="EMD-29758"/>
<dbReference type="EMDB" id="EMD-29759"/>
<dbReference type="EMDB" id="EMD-29760"/>
<dbReference type="EMDB" id="EMD-29771"/>
<dbReference type="EMDB" id="EMD-33329"/>
<dbReference type="EMDB" id="EMD-33330"/>
<dbReference type="EMDB" id="EMD-35413"/>
<dbReference type="EMDB" id="EMD-35414"/>
<dbReference type="EMDB" id="EMD-36178"/>
<dbReference type="EMDB" id="EMD-36179"/>
<dbReference type="EMDB" id="EMD-36180"/>
<dbReference type="EMDB" id="EMD-36181"/>
<dbReference type="EMDB" id="EMD-36838"/>
<dbReference type="EMDB" id="EMD-3770"/>
<dbReference type="EMDB" id="EMD-38548"/>
<dbReference type="EMDB" id="EMD-38549"/>
<dbReference type="EMDB" id="EMD-38629"/>
<dbReference type="EMDB" id="EMD-38630"/>
<dbReference type="EMDB" id="EMD-38631"/>
<dbReference type="EMDB" id="EMD-38752"/>
<dbReference type="EMDB" id="EMD-38753"/>
<dbReference type="EMDB" id="EMD-38754"/>
<dbReference type="EMDB" id="EMD-3883"/>
<dbReference type="EMDB" id="EMD-39455"/>
<dbReference type="EMDB" id="EMD-39456"/>
<dbReference type="EMDB" id="EMD-39956"/>
<dbReference type="EMDB" id="EMD-39957"/>
<dbReference type="EMDB" id="EMD-39958"/>
<dbReference type="EMDB" id="EMD-40205"/>
<dbReference type="EMDB" id="EMD-4070"/>
<dbReference type="EMDB" id="EMD-41039"/>
<dbReference type="EMDB" id="EMD-42351"/>
<dbReference type="EMDB" id="EMD-4242"/>
<dbReference type="EMDB" id="EMD-4350"/>
<dbReference type="EMDB" id="EMD-4351"/>
<dbReference type="EMDB" id="EMD-4352"/>
<dbReference type="EMDB" id="EMD-4353"/>
<dbReference type="EMDB" id="EMD-44641"/>
<dbReference type="EMDB" id="EMD-44671"/>
<dbReference type="EMDB" id="EMD-45170"/>
<dbReference type="EMDB" id="EMD-51132"/>
<dbReference type="EMDB" id="EMD-51134"/>
<dbReference type="EMDB" id="EMD-9701"/>
<dbReference type="EMDB" id="EMD-9702"/>
<dbReference type="EMDB" id="EMD-9703"/>
<dbReference type="SMR" id="P60866"/>
<dbReference type="BioGRID" id="112138">
    <property type="interactions" value="535"/>
</dbReference>
<dbReference type="ComplexPortal" id="CPX-5223">
    <property type="entry name" value="40S cytosolic small ribosomal subunit"/>
</dbReference>
<dbReference type="CORUM" id="P60866"/>
<dbReference type="DIP" id="DIP-31245N"/>
<dbReference type="FunCoup" id="P60866">
    <property type="interactions" value="1676"/>
</dbReference>
<dbReference type="IntAct" id="P60866">
    <property type="interactions" value="154"/>
</dbReference>
<dbReference type="MINT" id="P60866"/>
<dbReference type="STRING" id="9606.ENSP00000429374"/>
<dbReference type="GlyGen" id="P60866">
    <property type="glycosylation" value="2 sites, 1 O-linked glycan (1 site)"/>
</dbReference>
<dbReference type="iPTMnet" id="P60866"/>
<dbReference type="PhosphoSitePlus" id="P60866"/>
<dbReference type="SwissPalm" id="P60866"/>
<dbReference type="BioMuta" id="RPS20"/>
<dbReference type="DMDM" id="46397703"/>
<dbReference type="jPOST" id="P60866"/>
<dbReference type="MassIVE" id="P60866"/>
<dbReference type="PaxDb" id="9606-ENSP00000429374"/>
<dbReference type="PeptideAtlas" id="P60866"/>
<dbReference type="ProteomicsDB" id="57229">
    <molecule id="P60866-1"/>
</dbReference>
<dbReference type="ProteomicsDB" id="57230">
    <molecule id="P60866-2"/>
</dbReference>
<dbReference type="Pumba" id="P60866"/>
<dbReference type="TopDownProteomics" id="P60866-1">
    <molecule id="P60866-1"/>
</dbReference>
<dbReference type="TopDownProteomics" id="P60866-2">
    <molecule id="P60866-2"/>
</dbReference>
<dbReference type="Antibodypedia" id="1248">
    <property type="antibodies" value="234 antibodies from 31 providers"/>
</dbReference>
<dbReference type="DNASU" id="6224"/>
<dbReference type="Ensembl" id="ENST00000009589.8">
    <molecule id="P60866-1"/>
    <property type="protein sequence ID" value="ENSP00000009589.3"/>
    <property type="gene ID" value="ENSG00000008988.11"/>
</dbReference>
<dbReference type="Ensembl" id="ENST00000519807.5">
    <molecule id="P60866-2"/>
    <property type="protein sequence ID" value="ENSP00000429374.1"/>
    <property type="gene ID" value="ENSG00000008988.11"/>
</dbReference>
<dbReference type="Ensembl" id="ENST00000521262.5">
    <molecule id="P60866-1"/>
    <property type="protein sequence ID" value="ENSP00000427788.1"/>
    <property type="gene ID" value="ENSG00000008988.11"/>
</dbReference>
<dbReference type="Ensembl" id="ENST00000676461.1">
    <molecule id="P60866-1"/>
    <property type="protein sequence ID" value="ENSP00000504670.1"/>
    <property type="gene ID" value="ENSG00000008988.11"/>
</dbReference>
<dbReference type="Ensembl" id="ENST00000676918.1">
    <molecule id="P60866-1"/>
    <property type="protein sequence ID" value="ENSP00000503327.1"/>
    <property type="gene ID" value="ENSG00000008988.11"/>
</dbReference>
<dbReference type="Ensembl" id="ENST00000678039.1">
    <molecule id="P60866-1"/>
    <property type="protein sequence ID" value="ENSP00000504154.1"/>
    <property type="gene ID" value="ENSG00000008988.11"/>
</dbReference>
<dbReference type="Ensembl" id="ENST00000678683.1">
    <molecule id="P60866-1"/>
    <property type="protein sequence ID" value="ENSP00000504123.1"/>
    <property type="gene ID" value="ENSG00000008988.11"/>
</dbReference>
<dbReference type="GeneID" id="6224"/>
<dbReference type="KEGG" id="hsa:6224"/>
<dbReference type="MANE-Select" id="ENST00000009589.8">
    <property type="protein sequence ID" value="ENSP00000009589.3"/>
    <property type="RefSeq nucleotide sequence ID" value="NM_001023.4"/>
    <property type="RefSeq protein sequence ID" value="NP_001014.1"/>
</dbReference>
<dbReference type="UCSC" id="uc003xsm.3">
    <molecule id="P60866-1"/>
    <property type="organism name" value="human"/>
</dbReference>
<dbReference type="AGR" id="HGNC:10405"/>
<dbReference type="CTD" id="6224"/>
<dbReference type="DisGeNET" id="6224"/>
<dbReference type="GeneCards" id="RPS20"/>
<dbReference type="HGNC" id="HGNC:10405">
    <property type="gene designation" value="RPS20"/>
</dbReference>
<dbReference type="HPA" id="ENSG00000008988">
    <property type="expression patterns" value="Low tissue specificity"/>
</dbReference>
<dbReference type="MalaCards" id="RPS20"/>
<dbReference type="MIM" id="603682">
    <property type="type" value="gene"/>
</dbReference>
<dbReference type="neXtProt" id="NX_P60866"/>
<dbReference type="OpenTargets" id="ENSG00000008988"/>
<dbReference type="Orphanet" id="124">
    <property type="disease" value="Diamond-Blackfan anemia"/>
</dbReference>
<dbReference type="Orphanet" id="440437">
    <property type="disease" value="Familial colorectal cancer Type X"/>
</dbReference>
<dbReference type="PharmGKB" id="PA34807"/>
<dbReference type="VEuPathDB" id="HostDB:ENSG00000008988"/>
<dbReference type="eggNOG" id="KOG0900">
    <property type="taxonomic scope" value="Eukaryota"/>
</dbReference>
<dbReference type="GeneTree" id="ENSGT00390000003248"/>
<dbReference type="HOGENOM" id="CLU_122625_0_0_1"/>
<dbReference type="InParanoid" id="P60866"/>
<dbReference type="OMA" id="WCEYRRR"/>
<dbReference type="OrthoDB" id="9512708at2759"/>
<dbReference type="PAN-GO" id="P60866">
    <property type="GO annotations" value="2 GO annotations based on evolutionary models"/>
</dbReference>
<dbReference type="PhylomeDB" id="P60866"/>
<dbReference type="TreeFam" id="TF300222"/>
<dbReference type="PathwayCommons" id="P60866"/>
<dbReference type="Reactome" id="R-HSA-156827">
    <property type="pathway name" value="L13a-mediated translational silencing of Ceruloplasmin expression"/>
</dbReference>
<dbReference type="Reactome" id="R-HSA-156902">
    <property type="pathway name" value="Peptide chain elongation"/>
</dbReference>
<dbReference type="Reactome" id="R-HSA-1799339">
    <property type="pathway name" value="SRP-dependent cotranslational protein targeting to membrane"/>
</dbReference>
<dbReference type="Reactome" id="R-HSA-192823">
    <property type="pathway name" value="Viral mRNA Translation"/>
</dbReference>
<dbReference type="Reactome" id="R-HSA-2408557">
    <property type="pathway name" value="Selenocysteine synthesis"/>
</dbReference>
<dbReference type="Reactome" id="R-HSA-6791226">
    <property type="pathway name" value="Major pathway of rRNA processing in the nucleolus and cytosol"/>
</dbReference>
<dbReference type="Reactome" id="R-HSA-72649">
    <property type="pathway name" value="Translation initiation complex formation"/>
</dbReference>
<dbReference type="Reactome" id="R-HSA-72689">
    <property type="pathway name" value="Formation of a pool of free 40S subunits"/>
</dbReference>
<dbReference type="Reactome" id="R-HSA-72695">
    <property type="pathway name" value="Formation of the ternary complex, and subsequently, the 43S complex"/>
</dbReference>
<dbReference type="Reactome" id="R-HSA-72702">
    <property type="pathway name" value="Ribosomal scanning and start codon recognition"/>
</dbReference>
<dbReference type="Reactome" id="R-HSA-72706">
    <property type="pathway name" value="GTP hydrolysis and joining of the 60S ribosomal subunit"/>
</dbReference>
<dbReference type="Reactome" id="R-HSA-72764">
    <property type="pathway name" value="Eukaryotic Translation Termination"/>
</dbReference>
<dbReference type="Reactome" id="R-HSA-9010553">
    <property type="pathway name" value="Regulation of expression of SLITs and ROBOs"/>
</dbReference>
<dbReference type="Reactome" id="R-HSA-9633012">
    <property type="pathway name" value="Response of EIF2AK4 (GCN2) to amino acid deficiency"/>
</dbReference>
<dbReference type="Reactome" id="R-HSA-9735869">
    <property type="pathway name" value="SARS-CoV-1 modulates host translation machinery"/>
</dbReference>
<dbReference type="Reactome" id="R-HSA-9754678">
    <property type="pathway name" value="SARS-CoV-2 modulates host translation machinery"/>
</dbReference>
<dbReference type="Reactome" id="R-HSA-975956">
    <property type="pathway name" value="Nonsense Mediated Decay (NMD) independent of the Exon Junction Complex (EJC)"/>
</dbReference>
<dbReference type="Reactome" id="R-HSA-975957">
    <property type="pathway name" value="Nonsense Mediated Decay (NMD) enhanced by the Exon Junction Complex (EJC)"/>
</dbReference>
<dbReference type="SignaLink" id="P60866"/>
<dbReference type="SIGNOR" id="P60866"/>
<dbReference type="BioGRID-ORCS" id="6224">
    <property type="hits" value="804 hits in 1099 CRISPR screens"/>
</dbReference>
<dbReference type="CD-CODE" id="232F8A39">
    <property type="entry name" value="P-body"/>
</dbReference>
<dbReference type="ChiTaRS" id="RPS20">
    <property type="organism name" value="human"/>
</dbReference>
<dbReference type="EvolutionaryTrace" id="P60866"/>
<dbReference type="GeneWiki" id="RPS20"/>
<dbReference type="GenomeRNAi" id="6224"/>
<dbReference type="Pharos" id="P60866">
    <property type="development level" value="Tbio"/>
</dbReference>
<dbReference type="PRO" id="PR:P60866"/>
<dbReference type="Proteomes" id="UP000005640">
    <property type="component" value="Chromosome 8"/>
</dbReference>
<dbReference type="RNAct" id="P60866">
    <property type="molecule type" value="protein"/>
</dbReference>
<dbReference type="Bgee" id="ENSG00000008988">
    <property type="expression patterns" value="Expressed in adult organism and 216 other cell types or tissues"/>
</dbReference>
<dbReference type="ExpressionAtlas" id="P60866">
    <property type="expression patterns" value="baseline and differential"/>
</dbReference>
<dbReference type="GO" id="GO:0005737">
    <property type="term" value="C:cytoplasm"/>
    <property type="evidence" value="ECO:0000303"/>
    <property type="project" value="ComplexPortal"/>
</dbReference>
<dbReference type="GO" id="GO:0005829">
    <property type="term" value="C:cytosol"/>
    <property type="evidence" value="ECO:0000304"/>
    <property type="project" value="Reactome"/>
</dbReference>
<dbReference type="GO" id="GO:0022626">
    <property type="term" value="C:cytosolic ribosome"/>
    <property type="evidence" value="ECO:0000314"/>
    <property type="project" value="FlyBase"/>
</dbReference>
<dbReference type="GO" id="GO:0022627">
    <property type="term" value="C:cytosolic small ribosomal subunit"/>
    <property type="evidence" value="ECO:0000314"/>
    <property type="project" value="UniProtKB"/>
</dbReference>
<dbReference type="GO" id="GO:0070062">
    <property type="term" value="C:extracellular exosome"/>
    <property type="evidence" value="ECO:0007005"/>
    <property type="project" value="UniProtKB"/>
</dbReference>
<dbReference type="GO" id="GO:0016020">
    <property type="term" value="C:membrane"/>
    <property type="evidence" value="ECO:0007005"/>
    <property type="project" value="UniProtKB"/>
</dbReference>
<dbReference type="GO" id="GO:0005654">
    <property type="term" value="C:nucleoplasm"/>
    <property type="evidence" value="ECO:0000304"/>
    <property type="project" value="Reactome"/>
</dbReference>
<dbReference type="GO" id="GO:0045202">
    <property type="term" value="C:synapse"/>
    <property type="evidence" value="ECO:0007669"/>
    <property type="project" value="Ensembl"/>
</dbReference>
<dbReference type="GO" id="GO:0097371">
    <property type="term" value="F:MDM2/MDM4 family protein binding"/>
    <property type="evidence" value="ECO:0000353"/>
    <property type="project" value="FlyBase"/>
</dbReference>
<dbReference type="GO" id="GO:0003723">
    <property type="term" value="F:RNA binding"/>
    <property type="evidence" value="ECO:0007005"/>
    <property type="project" value="UniProtKB"/>
</dbReference>
<dbReference type="GO" id="GO:0003735">
    <property type="term" value="F:structural constituent of ribosome"/>
    <property type="evidence" value="ECO:0000314"/>
    <property type="project" value="FlyBase"/>
</dbReference>
<dbReference type="GO" id="GO:1990948">
    <property type="term" value="F:ubiquitin ligase inhibitor activity"/>
    <property type="evidence" value="ECO:0000314"/>
    <property type="project" value="FlyBase"/>
</dbReference>
<dbReference type="GO" id="GO:0002181">
    <property type="term" value="P:cytoplasmic translation"/>
    <property type="evidence" value="ECO:0000303"/>
    <property type="project" value="ComplexPortal"/>
</dbReference>
<dbReference type="GO" id="GO:1901798">
    <property type="term" value="P:positive regulation of signal transduction by p53 class mediator"/>
    <property type="evidence" value="ECO:0000314"/>
    <property type="project" value="FlyBase"/>
</dbReference>
<dbReference type="GO" id="GO:0006412">
    <property type="term" value="P:translation"/>
    <property type="evidence" value="ECO:0000303"/>
    <property type="project" value="UniProtKB"/>
</dbReference>
<dbReference type="FunFam" id="3.30.70.600:FF:000011">
    <property type="entry name" value="Uncharacterized protein"/>
    <property type="match status" value="1"/>
</dbReference>
<dbReference type="Gene3D" id="3.30.70.600">
    <property type="entry name" value="Ribosomal protein S10 domain"/>
    <property type="match status" value="1"/>
</dbReference>
<dbReference type="HAMAP" id="MF_00508">
    <property type="entry name" value="Ribosomal_uS10"/>
    <property type="match status" value="1"/>
</dbReference>
<dbReference type="InterPro" id="IPR001848">
    <property type="entry name" value="Ribosomal_uS10"/>
</dbReference>
<dbReference type="InterPro" id="IPR018268">
    <property type="entry name" value="Ribosomal_uS10_CS"/>
</dbReference>
<dbReference type="InterPro" id="IPR027486">
    <property type="entry name" value="Ribosomal_uS10_dom"/>
</dbReference>
<dbReference type="InterPro" id="IPR036838">
    <property type="entry name" value="Ribosomal_uS10_dom_sf"/>
</dbReference>
<dbReference type="InterPro" id="IPR005729">
    <property type="entry name" value="Ribosomal_uS10_euk/arc"/>
</dbReference>
<dbReference type="NCBIfam" id="TIGR01046">
    <property type="entry name" value="uS10_euk_arch"/>
    <property type="match status" value="1"/>
</dbReference>
<dbReference type="PANTHER" id="PTHR11700">
    <property type="entry name" value="30S RIBOSOMAL PROTEIN S10 FAMILY MEMBER"/>
    <property type="match status" value="1"/>
</dbReference>
<dbReference type="Pfam" id="PF00338">
    <property type="entry name" value="Ribosomal_S10"/>
    <property type="match status" value="1"/>
</dbReference>
<dbReference type="PRINTS" id="PR00971">
    <property type="entry name" value="RIBOSOMALS10"/>
</dbReference>
<dbReference type="SMART" id="SM01403">
    <property type="entry name" value="Ribosomal_S10"/>
    <property type="match status" value="1"/>
</dbReference>
<dbReference type="SUPFAM" id="SSF54999">
    <property type="entry name" value="Ribosomal protein S10"/>
    <property type="match status" value="1"/>
</dbReference>
<dbReference type="PROSITE" id="PS00361">
    <property type="entry name" value="RIBOSOMAL_S10"/>
    <property type="match status" value="1"/>
</dbReference>
<name>RS20_HUMAN</name>
<evidence type="ECO:0000250" key="1">
    <source>
        <dbReference type="UniProtKB" id="P60867"/>
    </source>
</evidence>
<evidence type="ECO:0000269" key="2">
    <source>
    </source>
</evidence>
<evidence type="ECO:0000269" key="3">
    <source>
    </source>
</evidence>
<evidence type="ECO:0000269" key="4">
    <source>
    </source>
</evidence>
<evidence type="ECO:0000269" key="5">
    <source>
    </source>
</evidence>
<evidence type="ECO:0000269" key="6">
    <source>
    </source>
</evidence>
<evidence type="ECO:0000269" key="7">
    <source>
    </source>
</evidence>
<evidence type="ECO:0000269" key="8">
    <source ref="7"/>
</evidence>
<evidence type="ECO:0000303" key="9">
    <source>
    </source>
</evidence>
<evidence type="ECO:0000303" key="10">
    <source>
    </source>
</evidence>
<evidence type="ECO:0000305" key="11"/>
<evidence type="ECO:0007744" key="12">
    <source>
    </source>
</evidence>
<evidence type="ECO:0007744" key="13">
    <source>
    </source>
</evidence>
<evidence type="ECO:0007829" key="14">
    <source>
        <dbReference type="PDB" id="7R4X"/>
    </source>
</evidence>
<proteinExistence type="evidence at protein level"/>
<comment type="function">
    <text evidence="2">Component of the small ribosomal subunit (PubMed:23636399). The ribosome is a large ribonucleoprotein complex responsible for the synthesis of proteins in the cell (PubMed:23636399).</text>
</comment>
<comment type="subunit">
    <text evidence="2">Component of the 40S small ribosomal subunit.</text>
</comment>
<comment type="interaction">
    <interactant intactId="EBI-353105">
        <id>P60866</id>
    </interactant>
    <interactant intactId="EBI-5323863">
        <id>Q5S007</id>
        <label>LRRK2</label>
    </interactant>
    <organismsDiffer>false</organismsDiffer>
    <experiments>4</experiments>
</comment>
<comment type="interaction">
    <interactant intactId="EBI-353105">
        <id>P60866</id>
    </interactant>
    <interactant intactId="EBI-716247">
        <id>Q15843</id>
        <label>NEDD8</label>
    </interactant>
    <organismsDiffer>false</organismsDiffer>
    <experiments>3</experiments>
</comment>
<comment type="interaction">
    <interactant intactId="EBI-353105">
        <id>P60866</id>
    </interactant>
    <interactant intactId="EBI-348313">
        <id>P36578</id>
        <label>RPL4</label>
    </interactant>
    <organismsDiffer>false</organismsDiffer>
    <experiments>5</experiments>
</comment>
<comment type="interaction">
    <interactant intactId="EBI-353105">
        <id>P60866</id>
    </interactant>
    <interactant intactId="EBI-25489144">
        <id>Q6S8E0</id>
        <label>ORF9b</label>
    </interactant>
    <organismsDiffer>true</organismsDiffer>
    <experiments>2</experiments>
</comment>
<comment type="subcellular location">
    <subcellularLocation>
        <location evidence="2">Cytoplasm</location>
    </subcellularLocation>
</comment>
<comment type="alternative products">
    <event type="alternative splicing"/>
    <isoform>
        <id>P60866-1</id>
        <name>1</name>
        <sequence type="displayed"/>
    </isoform>
    <isoform>
        <id>P60866-2</id>
        <name>2</name>
        <sequence type="described" ref="VSP_042724"/>
    </isoform>
</comment>
<comment type="PTM">
    <text evidence="3 4 5 6 7">Polyubiquitinated by ZNF598 via 'Lys-63'-linked ubiquitin chains when a ribosome has stalled, initiating the ribosome quality control (RQC) pathway to degrade the potentially detrimental aberrant nascent polypeptide (PubMed:28065601, PubMed:28132843, PubMed:28685749, PubMed:32011234, PubMed:36302773). Deubiquitinated by OTUD3 and USP21, antagonizing ZNF598 activity (PubMed:32011234).</text>
</comment>
<comment type="PTM">
    <text evidence="1">Ufmylated by UFL1.</text>
</comment>
<comment type="similarity">
    <text evidence="11">Belongs to the universal ribosomal protein uS10 family.</text>
</comment>